<organism>
    <name type="scientific">Aspergillus oryzae (strain ATCC 42149 / RIB 40)</name>
    <name type="common">Yellow koji mold</name>
    <dbReference type="NCBI Taxonomy" id="510516"/>
    <lineage>
        <taxon>Eukaryota</taxon>
        <taxon>Fungi</taxon>
        <taxon>Dikarya</taxon>
        <taxon>Ascomycota</taxon>
        <taxon>Pezizomycotina</taxon>
        <taxon>Eurotiomycetes</taxon>
        <taxon>Eurotiomycetidae</taxon>
        <taxon>Eurotiales</taxon>
        <taxon>Aspergillaceae</taxon>
        <taxon>Aspergillus</taxon>
        <taxon>Aspergillus subgen. Circumdati</taxon>
    </lineage>
</organism>
<proteinExistence type="evidence at transcript level"/>
<dbReference type="EMBL" id="BA000050">
    <property type="protein sequence ID" value="BAE57126.1"/>
    <property type="molecule type" value="Genomic_DNA"/>
</dbReference>
<dbReference type="RefSeq" id="XP_001819128.1">
    <property type="nucleotide sequence ID" value="XM_001819076.2"/>
</dbReference>
<dbReference type="SMR" id="Q2UMT9"/>
<dbReference type="STRING" id="510516.Q2UMT9"/>
<dbReference type="EnsemblFungi" id="BAE57126">
    <property type="protein sequence ID" value="BAE57126"/>
    <property type="gene ID" value="AO090001000627"/>
</dbReference>
<dbReference type="GeneID" id="5991099"/>
<dbReference type="KEGG" id="aor:AO090001000627"/>
<dbReference type="VEuPathDB" id="FungiDB:AO090001000627"/>
<dbReference type="HOGENOM" id="CLU_011807_0_0_1"/>
<dbReference type="OMA" id="LNMACGN"/>
<dbReference type="OrthoDB" id="108031at5052"/>
<dbReference type="Proteomes" id="UP000006564">
    <property type="component" value="Chromosome 2"/>
</dbReference>
<dbReference type="GO" id="GO:0005737">
    <property type="term" value="C:cytoplasm"/>
    <property type="evidence" value="ECO:0007669"/>
    <property type="project" value="UniProtKB-SubCell"/>
</dbReference>
<dbReference type="GO" id="GO:0090575">
    <property type="term" value="C:RNA polymerase II transcription regulator complex"/>
    <property type="evidence" value="ECO:0007669"/>
    <property type="project" value="TreeGrafter"/>
</dbReference>
<dbReference type="GO" id="GO:0001228">
    <property type="term" value="F:DNA-binding transcription activator activity, RNA polymerase II-specific"/>
    <property type="evidence" value="ECO:0007669"/>
    <property type="project" value="TreeGrafter"/>
</dbReference>
<dbReference type="GO" id="GO:0000976">
    <property type="term" value="F:transcription cis-regulatory region binding"/>
    <property type="evidence" value="ECO:0007669"/>
    <property type="project" value="InterPro"/>
</dbReference>
<dbReference type="GO" id="GO:0033554">
    <property type="term" value="P:cellular response to stress"/>
    <property type="evidence" value="ECO:0007669"/>
    <property type="project" value="UniProtKB-ARBA"/>
</dbReference>
<dbReference type="CDD" id="cd14688">
    <property type="entry name" value="bZIP_YAP"/>
    <property type="match status" value="1"/>
</dbReference>
<dbReference type="FunFam" id="1.20.5.170:FF:000067">
    <property type="entry name" value="BZIP transcription factor"/>
    <property type="match status" value="1"/>
</dbReference>
<dbReference type="FunFam" id="1.10.238.100:FF:000001">
    <property type="entry name" value="BZIP transcription factor (AP-1)"/>
    <property type="match status" value="1"/>
</dbReference>
<dbReference type="Gene3D" id="1.20.5.170">
    <property type="match status" value="1"/>
</dbReference>
<dbReference type="Gene3D" id="1.10.238.100">
    <property type="entry name" value="YAP1 redox domain. Chain B"/>
    <property type="match status" value="1"/>
</dbReference>
<dbReference type="InterPro" id="IPR050936">
    <property type="entry name" value="AP-1-like"/>
</dbReference>
<dbReference type="InterPro" id="IPR004827">
    <property type="entry name" value="bZIP"/>
</dbReference>
<dbReference type="InterPro" id="IPR046347">
    <property type="entry name" value="bZIP_sf"/>
</dbReference>
<dbReference type="InterPro" id="IPR013910">
    <property type="entry name" value="TF_PAP1"/>
</dbReference>
<dbReference type="InterPro" id="IPR023167">
    <property type="entry name" value="Yap1_redox_dom_sf"/>
</dbReference>
<dbReference type="PANTHER" id="PTHR40621:SF6">
    <property type="entry name" value="AP-1-LIKE TRANSCRIPTION FACTOR YAP1-RELATED"/>
    <property type="match status" value="1"/>
</dbReference>
<dbReference type="PANTHER" id="PTHR40621">
    <property type="entry name" value="TRANSCRIPTION FACTOR KAPC-RELATED"/>
    <property type="match status" value="1"/>
</dbReference>
<dbReference type="Pfam" id="PF00170">
    <property type="entry name" value="bZIP_1"/>
    <property type="match status" value="1"/>
</dbReference>
<dbReference type="Pfam" id="PF08601">
    <property type="entry name" value="PAP1"/>
    <property type="match status" value="1"/>
</dbReference>
<dbReference type="SMART" id="SM00338">
    <property type="entry name" value="BRLZ"/>
    <property type="match status" value="1"/>
</dbReference>
<dbReference type="SUPFAM" id="SSF57959">
    <property type="entry name" value="Leucine zipper domain"/>
    <property type="match status" value="1"/>
</dbReference>
<dbReference type="SUPFAM" id="SSF111430">
    <property type="entry name" value="YAP1 redox domain"/>
    <property type="match status" value="1"/>
</dbReference>
<dbReference type="PROSITE" id="PS50217">
    <property type="entry name" value="BZIP"/>
    <property type="match status" value="1"/>
</dbReference>
<dbReference type="PROSITE" id="PS00036">
    <property type="entry name" value="BZIP_BASIC"/>
    <property type="match status" value="1"/>
</dbReference>
<feature type="chain" id="PRO_0000449501" description="AP-1-like transcription factor yap1">
    <location>
        <begin position="1"/>
        <end position="563"/>
    </location>
</feature>
<feature type="domain" description="bZIP" evidence="4">
    <location>
        <begin position="154"/>
        <end position="217"/>
    </location>
</feature>
<feature type="region of interest" description="Disordered" evidence="5">
    <location>
        <begin position="23"/>
        <end position="179"/>
    </location>
</feature>
<feature type="region of interest" description="Basic motif" evidence="4">
    <location>
        <begin position="159"/>
        <end position="180"/>
    </location>
</feature>
<feature type="region of interest" description="Leucine-zipper" evidence="4">
    <location>
        <begin position="182"/>
        <end position="189"/>
    </location>
</feature>
<feature type="region of interest" description="Transcription activation 1" evidence="1">
    <location>
        <begin position="211"/>
        <end position="332"/>
    </location>
</feature>
<feature type="region of interest" description="Disordered" evidence="5">
    <location>
        <begin position="267"/>
        <end position="380"/>
    </location>
</feature>
<feature type="region of interest" description="n-CRD" evidence="1">
    <location>
        <begin position="284"/>
        <end position="296"/>
    </location>
</feature>
<feature type="region of interest" description="Transcription activation 2" evidence="1">
    <location>
        <begin position="377"/>
        <end position="459"/>
    </location>
</feature>
<feature type="region of interest" description="Disordered" evidence="5">
    <location>
        <begin position="394"/>
        <end position="420"/>
    </location>
</feature>
<feature type="region of interest" description="c-CRD" evidence="1">
    <location>
        <begin position="510"/>
        <end position="543"/>
    </location>
</feature>
<feature type="short sequence motif" description="Bipartite nuclear localization signal" evidence="3">
    <location>
        <begin position="35"/>
        <end position="42"/>
    </location>
</feature>
<feature type="short sequence motif" description="Bipartite nuclear localization signal" evidence="3">
    <location>
        <begin position="68"/>
        <end position="75"/>
    </location>
</feature>
<feature type="short sequence motif" description="Nuclear export signal" evidence="1">
    <location>
        <begin position="528"/>
        <end position="535"/>
    </location>
</feature>
<feature type="compositionally biased region" description="Basic and acidic residues" evidence="5">
    <location>
        <begin position="36"/>
        <end position="48"/>
    </location>
</feature>
<feature type="compositionally biased region" description="Low complexity" evidence="5">
    <location>
        <begin position="52"/>
        <end position="67"/>
    </location>
</feature>
<feature type="compositionally biased region" description="Acidic residues" evidence="5">
    <location>
        <begin position="79"/>
        <end position="94"/>
    </location>
</feature>
<feature type="compositionally biased region" description="Basic and acidic residues" evidence="5">
    <location>
        <begin position="112"/>
        <end position="144"/>
    </location>
</feature>
<feature type="compositionally biased region" description="Basic and acidic residues" evidence="5">
    <location>
        <begin position="170"/>
        <end position="179"/>
    </location>
</feature>
<feature type="compositionally biased region" description="Polar residues" evidence="5">
    <location>
        <begin position="300"/>
        <end position="309"/>
    </location>
</feature>
<feature type="compositionally biased region" description="Low complexity" evidence="5">
    <location>
        <begin position="336"/>
        <end position="362"/>
    </location>
</feature>
<feature type="compositionally biased region" description="Polar residues" evidence="5">
    <location>
        <begin position="363"/>
        <end position="380"/>
    </location>
</feature>
<feature type="compositionally biased region" description="Polar residues" evidence="5">
    <location>
        <begin position="401"/>
        <end position="416"/>
    </location>
</feature>
<feature type="disulfide bond" description="In nuclear retained form; alternate" evidence="1">
    <location>
        <begin position="510"/>
        <end position="543"/>
    </location>
</feature>
<feature type="disulfide bond" description="In nuclear retained form; alternate" evidence="1">
    <location>
        <begin position="510"/>
        <end position="534"/>
    </location>
</feature>
<feature type="disulfide bond" description="In nuclear retained form; alternate" evidence="1">
    <location>
        <begin position="534"/>
        <end position="543"/>
    </location>
</feature>
<gene>
    <name evidence="7" type="primary">yap1</name>
    <name type="ORF">AO090001000627</name>
</gene>
<reference key="1">
    <citation type="journal article" date="2005" name="Nature">
        <title>Genome sequencing and analysis of Aspergillus oryzae.</title>
        <authorList>
            <person name="Machida M."/>
            <person name="Asai K."/>
            <person name="Sano M."/>
            <person name="Tanaka T."/>
            <person name="Kumagai T."/>
            <person name="Terai G."/>
            <person name="Kusumoto K."/>
            <person name="Arima T."/>
            <person name="Akita O."/>
            <person name="Kashiwagi Y."/>
            <person name="Abe K."/>
            <person name="Gomi K."/>
            <person name="Horiuchi H."/>
            <person name="Kitamoto K."/>
            <person name="Kobayashi T."/>
            <person name="Takeuchi M."/>
            <person name="Denning D.W."/>
            <person name="Galagan J.E."/>
            <person name="Nierman W.C."/>
            <person name="Yu J."/>
            <person name="Archer D.B."/>
            <person name="Bennett J.W."/>
            <person name="Bhatnagar D."/>
            <person name="Cleveland T.E."/>
            <person name="Fedorova N.D."/>
            <person name="Gotoh O."/>
            <person name="Horikawa H."/>
            <person name="Hosoyama A."/>
            <person name="Ichinomiya M."/>
            <person name="Igarashi R."/>
            <person name="Iwashita K."/>
            <person name="Juvvadi P.R."/>
            <person name="Kato M."/>
            <person name="Kato Y."/>
            <person name="Kin T."/>
            <person name="Kokubun A."/>
            <person name="Maeda H."/>
            <person name="Maeyama N."/>
            <person name="Maruyama J."/>
            <person name="Nagasaki H."/>
            <person name="Nakajima T."/>
            <person name="Oda K."/>
            <person name="Okada K."/>
            <person name="Paulsen I."/>
            <person name="Sakamoto K."/>
            <person name="Sawano T."/>
            <person name="Takahashi M."/>
            <person name="Takase K."/>
            <person name="Terabayashi Y."/>
            <person name="Wortman J.R."/>
            <person name="Yamada O."/>
            <person name="Yamagata Y."/>
            <person name="Anazawa H."/>
            <person name="Hata Y."/>
            <person name="Koide Y."/>
            <person name="Komori T."/>
            <person name="Koyama Y."/>
            <person name="Minetoki T."/>
            <person name="Suharnan S."/>
            <person name="Tanaka A."/>
            <person name="Isono K."/>
            <person name="Kuhara S."/>
            <person name="Ogasawara N."/>
            <person name="Kikuchi H."/>
        </authorList>
    </citation>
    <scope>NUCLEOTIDE SEQUENCE [LARGE SCALE GENOMIC DNA]</scope>
    <source>
        <strain>ATCC 42149 / RIB 40</strain>
    </source>
</reference>
<reference key="2">
    <citation type="journal article" date="2019" name="Microorganisms">
        <title>Oxidative stress response of Aspergillus oryzae induced by hydrogen peroxide and menadione sodium bisulfite.</title>
        <authorList>
            <person name="Shao H."/>
            <person name="Tu Y."/>
            <person name="Wang Y."/>
            <person name="Jiang C."/>
            <person name="Ma L."/>
            <person name="Hu Z."/>
            <person name="Wang J."/>
            <person name="Zeng B."/>
            <person name="He B."/>
        </authorList>
    </citation>
    <scope>FUNCTION</scope>
    <scope>INDUCTION</scope>
</reference>
<accession>Q2UMT9</accession>
<protein>
    <recommendedName>
        <fullName evidence="7">AP-1-like transcription factor yap1</fullName>
    </recommendedName>
    <alternativeName>
        <fullName evidence="7">BZIP domain-containing transcription factor yap1</fullName>
    </alternativeName>
</protein>
<evidence type="ECO:0000250" key="1">
    <source>
        <dbReference type="UniProtKB" id="P19880"/>
    </source>
</evidence>
<evidence type="ECO:0000250" key="2">
    <source>
        <dbReference type="UniProtKB" id="Q4WMH0"/>
    </source>
</evidence>
<evidence type="ECO:0000255" key="3">
    <source>
        <dbReference type="PROSITE-ProRule" id="PRU00768"/>
    </source>
</evidence>
<evidence type="ECO:0000255" key="4">
    <source>
        <dbReference type="PROSITE-ProRule" id="PRU00978"/>
    </source>
</evidence>
<evidence type="ECO:0000256" key="5">
    <source>
        <dbReference type="SAM" id="MobiDB-lite"/>
    </source>
</evidence>
<evidence type="ECO:0000269" key="6">
    <source>
    </source>
</evidence>
<evidence type="ECO:0000303" key="7">
    <source>
    </source>
</evidence>
<evidence type="ECO:0000305" key="8"/>
<sequence length="563" mass="61681">MADYNTLYHQGLYLSPDQQDLLLAALSSNQPPQKQQNDKQRSQAKTDPDSTPGNMSSGSFSMSPGFNKTHPGSGGLGYGDDESPFLDFNPELDFDFPGSENLIGDLPGSLPSEEHEVGEKRKDMSDNENEESGKKRRESDDKAAKKPGRKPLTSEPTSKRKAQNRAAQRAFRERKEKHLKDLETKVDELQKASDDANQENGLLRAQVERLQVELREYRKRLSWLTTGSGISAMSAIPSAHSRNLYGLNNNDFMFDFPKFGDLPGGHIFNGPLTKSNQNKPRDGSSPATSDSQVPGVMTRETLNGSNNRGMPTAKAANGVSNNPSPKVPSVYNIRQSASSHDSSNSCSPSSSSDSHQSQMLSSNGTSPEPSSNSPATKLNDSVQNHHACTYSTIDAVRGKSESVSNTPSQPNNNYEQTPGPGLDLLAQQNGGQFDPVLFGDWREPQDAILSQDFGTFFDDAFPLPDLGSPSHNFNEVANPQPPKKDLIAEIDNKLDEEVVPGEDKSQMLSCTKIWDRLQSMEKFRNGEIDVDNLCSELRTKARCSEGGVVVNQKDVEDIMGRVK</sequence>
<keyword id="KW-0963">Cytoplasm</keyword>
<keyword id="KW-1015">Disulfide bond</keyword>
<keyword id="KW-0238">DNA-binding</keyword>
<keyword id="KW-0539">Nucleus</keyword>
<keyword id="KW-0558">Oxidation</keyword>
<keyword id="KW-1185">Reference proteome</keyword>
<keyword id="KW-0804">Transcription</keyword>
<keyword id="KW-0805">Transcription regulation</keyword>
<name>AP1_ASPOR</name>
<comment type="function">
    <text evidence="2 6">Transcription activator involved in oxidative stress response and redox homeostasis (PubMed:31366149). Regulates the transcription of genes encoding antioxidant enzymes and components of the cellular thiol-reducing pathways (By similarity).</text>
</comment>
<comment type="subcellular location">
    <subcellularLocation>
        <location evidence="2">Nucleus</location>
    </subcellularLocation>
    <subcellularLocation>
        <location evidence="2">Cytoplasm</location>
    </subcellularLocation>
    <text evidence="2">The nuclear localization is oxidative stress-dependent and oxidized yap1 is found predominantly in the nucleus, while reduced yap1 is continuously exported to the cytoplasm.</text>
</comment>
<comment type="induction">
    <text evidence="6">Expression is enhanced upon oxidative stress stimuli.</text>
</comment>
<comment type="domain">
    <text evidence="1">Contains two cysteine rich domains (CRD), referred to as the N- and C-terminal CRD's, n-CRD and c-CRD, respectively. A nuclear export signal is embedded in the c-CRD, with which the nuclear export proteins interact only in the absence of disulfide bonds (or otherwise oxidized cysteines) within the c-CRD or between the c-CRD and the n-CRD.</text>
</comment>
<comment type="PTM">
    <text evidence="1">Depending on the oxidative stress inducing agent, yap1 can undergo two distinct conformational changes, both involving disulfide bond formation, and both masking the nuclear export signal, thus abolishing nuclear export.</text>
</comment>
<comment type="similarity">
    <text evidence="8">Belongs to the bZIP family. YAP subfamily.</text>
</comment>